<accession>A0A017SP50</accession>
<keyword id="KW-0637">Prenyltransferase</keyword>
<keyword id="KW-1185">Reference proteome</keyword>
<keyword id="KW-0808">Transferase</keyword>
<reference key="1">
    <citation type="journal article" date="2014" name="Nat. Commun.">
        <title>Genomic adaptations of the halophilic Dead Sea filamentous fungus Eurotium rubrum.</title>
        <authorList>
            <person name="Kis-Papo T."/>
            <person name="Weig A.R."/>
            <person name="Riley R."/>
            <person name="Persoh D."/>
            <person name="Salamov A."/>
            <person name="Sun H."/>
            <person name="Lipzen A."/>
            <person name="Wasser S.P."/>
            <person name="Rambold G."/>
            <person name="Grigoriev I.V."/>
            <person name="Nevo E."/>
        </authorList>
    </citation>
    <scope>NUCLEOTIDE SEQUENCE [LARGE SCALE GENOMIC DNA]</scope>
    <source>
        <strain>CBS 135680</strain>
    </source>
</reference>
<reference key="2">
    <citation type="journal article" date="2017" name="Org. Lett.">
        <title>Two prenyltransferases govern a consecutive prenylation cascade in the biosynthesis of echinulin and neoechinulin.</title>
        <authorList>
            <person name="Wohlgemuth V."/>
            <person name="Kindinger F."/>
            <person name="Xie X."/>
            <person name="Wang B.G."/>
            <person name="Li S.M."/>
        </authorList>
    </citation>
    <scope>FUNCTION</scope>
    <scope>CATALYTIC ACTIVITY</scope>
    <scope>BIOPHYSICOCHEMICAL PROPERTIES</scope>
    <scope>PATHWAY</scope>
</reference>
<reference key="3">
    <citation type="journal article" date="2021" name="ACS Chem. Biol.">
        <title>Prenylation and dehydrogenation of a C2-reversely prenylated diketopiperazine as a branching point in the biosynthesis of echinulin family alkaloids in Aspergillus ruber.</title>
        <authorList>
            <person name="Nies J."/>
            <person name="Li S.M."/>
        </authorList>
    </citation>
    <scope>FUNCTION</scope>
    <scope>CATALYTIC ACTIVITY</scope>
    <scope>PATHWAY</scope>
</reference>
<name>ECPT1_ASPRC</name>
<proteinExistence type="evidence at protein level"/>
<protein>
    <recommendedName>
        <fullName evidence="5">Echinulin prenyltransferase 1</fullName>
        <shortName evidence="5">EchPT1</shortName>
        <ecNumber evidence="3 4">2.5.1.-</ecNumber>
    </recommendedName>
    <alternativeName>
        <fullName evidence="5">Echinulin biosynthesis cluster protein echPT1</fullName>
    </alternativeName>
</protein>
<evidence type="ECO:0000250" key="1">
    <source>
        <dbReference type="UniProtKB" id="A0A1E3B0T2"/>
    </source>
</evidence>
<evidence type="ECO:0000250" key="2">
    <source>
        <dbReference type="UniProtKB" id="Q4WAW7"/>
    </source>
</evidence>
<evidence type="ECO:0000269" key="3">
    <source>
    </source>
</evidence>
<evidence type="ECO:0000269" key="4">
    <source>
    </source>
</evidence>
<evidence type="ECO:0000303" key="5">
    <source>
    </source>
</evidence>
<evidence type="ECO:0000305" key="6"/>
<organism>
    <name type="scientific">Aspergillus ruber (strain CBS 135680)</name>
    <dbReference type="NCBI Taxonomy" id="1388766"/>
    <lineage>
        <taxon>Eukaryota</taxon>
        <taxon>Fungi</taxon>
        <taxon>Dikarya</taxon>
        <taxon>Ascomycota</taxon>
        <taxon>Pezizomycotina</taxon>
        <taxon>Eurotiomycetes</taxon>
        <taxon>Eurotiomycetidae</taxon>
        <taxon>Eurotiales</taxon>
        <taxon>Aspergillaceae</taxon>
        <taxon>Aspergillus</taxon>
        <taxon>Aspergillus subgen. Aspergillus</taxon>
    </lineage>
</organism>
<dbReference type="EC" id="2.5.1.-" evidence="3 4"/>
<dbReference type="EMBL" id="KK088413">
    <property type="protein sequence ID" value="EYE98742.1"/>
    <property type="molecule type" value="Genomic_DNA"/>
</dbReference>
<dbReference type="SMR" id="A0A017SP50"/>
<dbReference type="HOGENOM" id="CLU_037431_0_0_1"/>
<dbReference type="OrthoDB" id="5392033at2759"/>
<dbReference type="Proteomes" id="UP000019804">
    <property type="component" value="Unassembled WGS sequence"/>
</dbReference>
<dbReference type="GO" id="GO:0004659">
    <property type="term" value="F:prenyltransferase activity"/>
    <property type="evidence" value="ECO:0007669"/>
    <property type="project" value="UniProtKB-KW"/>
</dbReference>
<dbReference type="GO" id="GO:0009820">
    <property type="term" value="P:alkaloid metabolic process"/>
    <property type="evidence" value="ECO:0007669"/>
    <property type="project" value="InterPro"/>
</dbReference>
<dbReference type="CDD" id="cd13929">
    <property type="entry name" value="PT-DMATS_CymD"/>
    <property type="match status" value="1"/>
</dbReference>
<dbReference type="InterPro" id="IPR033964">
    <property type="entry name" value="Aro_prenylTrfase"/>
</dbReference>
<dbReference type="InterPro" id="IPR017795">
    <property type="entry name" value="Aro_prenylTrfase_DMATS"/>
</dbReference>
<dbReference type="InterPro" id="IPR012148">
    <property type="entry name" value="DMATS-type_fun"/>
</dbReference>
<dbReference type="NCBIfam" id="TIGR03429">
    <property type="entry name" value="arom_pren_DMATS"/>
    <property type="match status" value="1"/>
</dbReference>
<dbReference type="PANTHER" id="PTHR40627">
    <property type="entry name" value="INDOLE PRENYLTRANSFERASE TDIB-RELATED"/>
    <property type="match status" value="1"/>
</dbReference>
<dbReference type="PANTHER" id="PTHR40627:SF3">
    <property type="entry name" value="PRENYLTRANSFERASE ASQH2-RELATED"/>
    <property type="match status" value="1"/>
</dbReference>
<dbReference type="Pfam" id="PF11991">
    <property type="entry name" value="Trp_DMAT"/>
    <property type="match status" value="1"/>
</dbReference>
<dbReference type="PIRSF" id="PIRSF000509">
    <property type="entry name" value="Trp_DMAT"/>
    <property type="match status" value="1"/>
</dbReference>
<dbReference type="SFLD" id="SFLDS00036">
    <property type="entry name" value="Aromatic_Prenyltransferase"/>
    <property type="match status" value="1"/>
</dbReference>
<dbReference type="SFLD" id="SFLDG01162">
    <property type="entry name" value="I"/>
    <property type="match status" value="1"/>
</dbReference>
<feature type="chain" id="PRO_0000457011" description="Echinulin prenyltransferase 1">
    <location>
        <begin position="1"/>
        <end position="417"/>
    </location>
</feature>
<feature type="binding site" evidence="2">
    <location>
        <position position="90"/>
    </location>
    <ligand>
        <name>dimethylallyl diphosphate</name>
        <dbReference type="ChEBI" id="CHEBI:57623"/>
    </ligand>
</feature>
<feature type="binding site" evidence="2">
    <location>
        <position position="179"/>
    </location>
    <ligand>
        <name>dimethylallyl diphosphate</name>
        <dbReference type="ChEBI" id="CHEBI:57623"/>
    </ligand>
</feature>
<feature type="binding site" evidence="2">
    <location>
        <position position="181"/>
    </location>
    <ligand>
        <name>dimethylallyl diphosphate</name>
        <dbReference type="ChEBI" id="CHEBI:57623"/>
    </ligand>
</feature>
<feature type="binding site" evidence="2">
    <location>
        <position position="248"/>
    </location>
    <ligand>
        <name>dimethylallyl diphosphate</name>
        <dbReference type="ChEBI" id="CHEBI:57623"/>
    </ligand>
</feature>
<feature type="binding site" evidence="2">
    <location>
        <position position="250"/>
    </location>
    <ligand>
        <name>dimethylallyl diphosphate</name>
        <dbReference type="ChEBI" id="CHEBI:57623"/>
    </ligand>
</feature>
<feature type="binding site" evidence="2">
    <location>
        <position position="333"/>
    </location>
    <ligand>
        <name>dimethylallyl diphosphate</name>
        <dbReference type="ChEBI" id="CHEBI:57623"/>
    </ligand>
</feature>
<feature type="binding site" evidence="2">
    <location>
        <position position="398"/>
    </location>
    <ligand>
        <name>dimethylallyl diphosphate</name>
        <dbReference type="ChEBI" id="CHEBI:57623"/>
    </ligand>
</feature>
<feature type="binding site" evidence="2">
    <location>
        <position position="402"/>
    </location>
    <ligand>
        <name>dimethylallyl diphosphate</name>
        <dbReference type="ChEBI" id="CHEBI:57623"/>
    </ligand>
</feature>
<feature type="site" description="Required for regioselectivity" evidence="2">
    <location>
        <position position="92"/>
    </location>
</feature>
<gene>
    <name evidence="5" type="primary">echPT1</name>
    <name type="ORF">EURHEDRAFT_448612</name>
</gene>
<sequence>MPSEVLTSYYDYPTHDQEAWWRDTGPLFGRFLKGAGYDVHTQYQYLVFFIKNILPSLGPYPARWRSTITPTGLPIEYSLNFQLNSRPLLRIGFEPLSRFSGTPQDPYNKIAAADLLNQLSKLQLHEFDTQLFNHFTNEFELSKSESESLQKQGGINGKSTVRSQTAFGFDLKGGRVAVKGYAFAGLKNRATGTPVGQLISNSIRNLEPQMHCWDSFSILNSYMEESDGWNEYSFVSWDCVDIERSRLKLYGVHNAVTWDKVKEMWTLGGRIENNATIKTGLELLQHMWSLLQINEGDRDYKGGFAADNGGKTLPIIWNYELNKGSPHPAPKFYFPVHGENDLQVSKSISEFFTHLGWQDHARQYPHLLRQIYPNQNISQTERLQAWISFAYNERTGPYLSVYYYSAERPPWGSDQVK</sequence>
<comment type="function">
    <text evidence="1 3 4">Prenyltransferase; part of the gene cluster that mediates the biosynthesis of echinulin family alkaloid (PubMed:29072465, PubMed:33381959). The pathway begins with the biosynthesis of the cyclic dipeptide cyclo-L-Trp-L-Ala (cyclo-TA) by the NRPS echPS via condensation of L-alanine and L-tryptophan (By similarity). The prenyltransferase echPT1 then catalyzes the first prenylation step, a reverse prenylation reaction at C2, to yield preechinulin (PubMed:29072465, PubMed:33381959). Preechinulin is the substrate of the cytochrome P450 monooxygenase echP450 that catalyzes the formation of the double bond between C10 and C11 to produce neoechulin A (PubMed:33381959). The unique prenyltransferase echPT2 functions as a competitive enzyme with echP450 for preechinulin metabolization and uses preechinulin for effective regiospecific prenylations. Preechinulin is prenylated by echPT2 at C5 or C7. C7-prenylation leads to accumulation of tardioxopiperazine B without further modification by echPT2. In contrast, the C5-prenylated tardioxopiperazine A can be prenylated again by echPT2, predominantly at C7 to form echinulin or less frequently at C4 to give variecolorin L. EchPT2 also accepts neoechilunin A to produce varlecolorin G (prenylation at C5) or isoechinulin A (prenylation at C7). EchPT2 further converts isoechinulin A into dehydroechinulin. Moreover, a yet unidentified enzyme can also convert neoechilunin A into neoechilunin B by introducing a double bond between positions C14 and C17 and thus provides a further substrate to echPT2 for C5 and C7 prenylation (PubMed:29072465, PubMed:33381959).</text>
</comment>
<comment type="catalytic activity">
    <reaction evidence="3 4">
        <text>cyclo(L-tryptophyl-L-alanyl) + dimethylallyl diphosphate = preechinulin + diphosphate</text>
        <dbReference type="Rhea" id="RHEA:73767"/>
        <dbReference type="ChEBI" id="CHEBI:33019"/>
        <dbReference type="ChEBI" id="CHEBI:57623"/>
        <dbReference type="ChEBI" id="CHEBI:193002"/>
        <dbReference type="ChEBI" id="CHEBI:193003"/>
    </reaction>
    <physiologicalReaction direction="left-to-right" evidence="3 4">
        <dbReference type="Rhea" id="RHEA:73768"/>
    </physiologicalReaction>
</comment>
<comment type="biophysicochemical properties">
    <kinetics>
        <KM evidence="3">0.09 mM for cyclo-L-Trp-L-Ala</KM>
        <KM evidence="3">0.18 mM for dimethylallyl diphosphate (DMAPP)</KM>
    </kinetics>
</comment>
<comment type="pathway">
    <text evidence="3 4">Secondary metabolite biosynthesis.</text>
</comment>
<comment type="pathway">
    <text evidence="3 4">Alkaloid biosynthesis.</text>
</comment>
<comment type="similarity">
    <text evidence="6">Belongs to the tryptophan dimethylallyltransferase family.</text>
</comment>